<reference key="1">
    <citation type="submission" date="2000-11" db="EMBL/GenBank/DDBJ databases">
        <title>Human genomic sequence of a false p73 target gene.</title>
        <authorList>
            <person name="Zheng X."/>
            <person name="Chen X."/>
        </authorList>
    </citation>
    <scope>NUCLEOTIDE SEQUENCE [GENOMIC DNA / MRNA] (ISOFORM 3)</scope>
    <source>
        <tissue>Mammary cancer</tissue>
    </source>
</reference>
<reference key="2">
    <citation type="journal article" date="2004" name="Nat. Genet.">
        <title>Complete sequencing and characterization of 21,243 full-length human cDNAs.</title>
        <authorList>
            <person name="Ota T."/>
            <person name="Suzuki Y."/>
            <person name="Nishikawa T."/>
            <person name="Otsuki T."/>
            <person name="Sugiyama T."/>
            <person name="Irie R."/>
            <person name="Wakamatsu A."/>
            <person name="Hayashi K."/>
            <person name="Sato H."/>
            <person name="Nagai K."/>
            <person name="Kimura K."/>
            <person name="Makita H."/>
            <person name="Sekine M."/>
            <person name="Obayashi M."/>
            <person name="Nishi T."/>
            <person name="Shibahara T."/>
            <person name="Tanaka T."/>
            <person name="Ishii S."/>
            <person name="Yamamoto J."/>
            <person name="Saito K."/>
            <person name="Kawai Y."/>
            <person name="Isono Y."/>
            <person name="Nakamura Y."/>
            <person name="Nagahari K."/>
            <person name="Murakami K."/>
            <person name="Yasuda T."/>
            <person name="Iwayanagi T."/>
            <person name="Wagatsuma M."/>
            <person name="Shiratori A."/>
            <person name="Sudo H."/>
            <person name="Hosoiri T."/>
            <person name="Kaku Y."/>
            <person name="Kodaira H."/>
            <person name="Kondo H."/>
            <person name="Sugawara M."/>
            <person name="Takahashi M."/>
            <person name="Kanda K."/>
            <person name="Yokoi T."/>
            <person name="Furuya T."/>
            <person name="Kikkawa E."/>
            <person name="Omura Y."/>
            <person name="Abe K."/>
            <person name="Kamihara K."/>
            <person name="Katsuta N."/>
            <person name="Sato K."/>
            <person name="Tanikawa M."/>
            <person name="Yamazaki M."/>
            <person name="Ninomiya K."/>
            <person name="Ishibashi T."/>
            <person name="Yamashita H."/>
            <person name="Murakawa K."/>
            <person name="Fujimori K."/>
            <person name="Tanai H."/>
            <person name="Kimata M."/>
            <person name="Watanabe M."/>
            <person name="Hiraoka S."/>
            <person name="Chiba Y."/>
            <person name="Ishida S."/>
            <person name="Ono Y."/>
            <person name="Takiguchi S."/>
            <person name="Watanabe S."/>
            <person name="Yosida M."/>
            <person name="Hotuta T."/>
            <person name="Kusano J."/>
            <person name="Kanehori K."/>
            <person name="Takahashi-Fujii A."/>
            <person name="Hara H."/>
            <person name="Tanase T.-O."/>
            <person name="Nomura Y."/>
            <person name="Togiya S."/>
            <person name="Komai F."/>
            <person name="Hara R."/>
            <person name="Takeuchi K."/>
            <person name="Arita M."/>
            <person name="Imose N."/>
            <person name="Musashino K."/>
            <person name="Yuuki H."/>
            <person name="Oshima A."/>
            <person name="Sasaki N."/>
            <person name="Aotsuka S."/>
            <person name="Yoshikawa Y."/>
            <person name="Matsunawa H."/>
            <person name="Ichihara T."/>
            <person name="Shiohata N."/>
            <person name="Sano S."/>
            <person name="Moriya S."/>
            <person name="Momiyama H."/>
            <person name="Satoh N."/>
            <person name="Takami S."/>
            <person name="Terashima Y."/>
            <person name="Suzuki O."/>
            <person name="Nakagawa S."/>
            <person name="Senoh A."/>
            <person name="Mizoguchi H."/>
            <person name="Goto Y."/>
            <person name="Shimizu F."/>
            <person name="Wakebe H."/>
            <person name="Hishigaki H."/>
            <person name="Watanabe T."/>
            <person name="Sugiyama A."/>
            <person name="Takemoto M."/>
            <person name="Kawakami B."/>
            <person name="Yamazaki M."/>
            <person name="Watanabe K."/>
            <person name="Kumagai A."/>
            <person name="Itakura S."/>
            <person name="Fukuzumi Y."/>
            <person name="Fujimori Y."/>
            <person name="Komiyama M."/>
            <person name="Tashiro H."/>
            <person name="Tanigami A."/>
            <person name="Fujiwara T."/>
            <person name="Ono T."/>
            <person name="Yamada K."/>
            <person name="Fujii Y."/>
            <person name="Ozaki K."/>
            <person name="Hirao M."/>
            <person name="Ohmori Y."/>
            <person name="Kawabata A."/>
            <person name="Hikiji T."/>
            <person name="Kobatake N."/>
            <person name="Inagaki H."/>
            <person name="Ikema Y."/>
            <person name="Okamoto S."/>
            <person name="Okitani R."/>
            <person name="Kawakami T."/>
            <person name="Noguchi S."/>
            <person name="Itoh T."/>
            <person name="Shigeta K."/>
            <person name="Senba T."/>
            <person name="Matsumura K."/>
            <person name="Nakajima Y."/>
            <person name="Mizuno T."/>
            <person name="Morinaga M."/>
            <person name="Sasaki M."/>
            <person name="Togashi T."/>
            <person name="Oyama M."/>
            <person name="Hata H."/>
            <person name="Watanabe M."/>
            <person name="Komatsu T."/>
            <person name="Mizushima-Sugano J."/>
            <person name="Satoh T."/>
            <person name="Shirai Y."/>
            <person name="Takahashi Y."/>
            <person name="Nakagawa K."/>
            <person name="Okumura K."/>
            <person name="Nagase T."/>
            <person name="Nomura N."/>
            <person name="Kikuchi H."/>
            <person name="Masuho Y."/>
            <person name="Yamashita R."/>
            <person name="Nakai K."/>
            <person name="Yada T."/>
            <person name="Nakamura Y."/>
            <person name="Ohara O."/>
            <person name="Isogai T."/>
            <person name="Sugano S."/>
        </authorList>
    </citation>
    <scope>NUCLEOTIDE SEQUENCE [LARGE SCALE MRNA] (ISOFORM 1)</scope>
    <scope>VARIANT PRO-346</scope>
    <source>
        <tissue>Adipose tissue</tissue>
    </source>
</reference>
<reference key="3">
    <citation type="submission" date="2005-07" db="EMBL/GenBank/DDBJ databases">
        <authorList>
            <person name="Mural R.J."/>
            <person name="Istrail S."/>
            <person name="Sutton G.G."/>
            <person name="Florea L."/>
            <person name="Halpern A.L."/>
            <person name="Mobarry C.M."/>
            <person name="Lippert R."/>
            <person name="Walenz B."/>
            <person name="Shatkay H."/>
            <person name="Dew I."/>
            <person name="Miller J.R."/>
            <person name="Flanigan M.J."/>
            <person name="Edwards N.J."/>
            <person name="Bolanos R."/>
            <person name="Fasulo D."/>
            <person name="Halldorsson B.V."/>
            <person name="Hannenhalli S."/>
            <person name="Turner R."/>
            <person name="Yooseph S."/>
            <person name="Lu F."/>
            <person name="Nusskern D.R."/>
            <person name="Shue B.C."/>
            <person name="Zheng X.H."/>
            <person name="Zhong F."/>
            <person name="Delcher A.L."/>
            <person name="Huson D.H."/>
            <person name="Kravitz S.A."/>
            <person name="Mouchard L."/>
            <person name="Reinert K."/>
            <person name="Remington K.A."/>
            <person name="Clark A.G."/>
            <person name="Waterman M.S."/>
            <person name="Eichler E.E."/>
            <person name="Adams M.D."/>
            <person name="Hunkapiller M.W."/>
            <person name="Myers E.W."/>
            <person name="Venter J.C."/>
        </authorList>
    </citation>
    <scope>NUCLEOTIDE SEQUENCE [LARGE SCALE GENOMIC DNA]</scope>
</reference>
<reference key="4">
    <citation type="journal article" date="2004" name="Genome Res.">
        <title>The status, quality, and expansion of the NIH full-length cDNA project: the Mammalian Gene Collection (MGC).</title>
        <authorList>
            <consortium name="The MGC Project Team"/>
        </authorList>
    </citation>
    <scope>NUCLEOTIDE SEQUENCE [LARGE SCALE MRNA] (ISOFORM 2)</scope>
    <source>
        <tissue>Lung</tissue>
    </source>
</reference>
<reference key="5">
    <citation type="journal article" date="2001" name="J. Biol. Chem.">
        <title>Identification of 12 new yeast mitochondrial ribosomal proteins including 6 that have no prokaryotic homologues.</title>
        <authorList>
            <person name="Saveanu C."/>
            <person name="Fromont-Racine M."/>
            <person name="Harington A."/>
            <person name="Ricard F."/>
            <person name="Namane A."/>
            <person name="Jacquier A."/>
        </authorList>
    </citation>
    <scope>IDENTIFICATION</scope>
</reference>
<reference key="6">
    <citation type="journal article" date="2023" name="Acta Naturae">
        <title>Testing a hypothesis of 12S rRNA methylation by putative METTL17 methyltransferase.</title>
        <authorList>
            <person name="Mashkovskaia A.V."/>
            <person name="Mariasina S.S."/>
            <person name="Serebryakova M.V."/>
            <person name="Rubtsova M.P."/>
            <person name="Dontsova O.A."/>
            <person name="Sergiev P.V."/>
        </authorList>
    </citation>
    <scope>FUNCTION</scope>
</reference>
<reference key="7">
    <citation type="journal article" date="2024" name="Mol. Cell">
        <title>METTL17 is an Fe-S cluster checkpoint for mitochondrial translation.</title>
        <authorList>
            <person name="Ast T."/>
            <person name="Itoh Y."/>
            <person name="Sadre S."/>
            <person name="McCoy J.G."/>
            <person name="Namkoong G."/>
            <person name="Wengrod J.C."/>
            <person name="Chicherin I."/>
            <person name="Joshi P.R."/>
            <person name="Kamenski P."/>
            <person name="Suess D.L.M."/>
            <person name="Amunts A."/>
            <person name="Mootha V.K."/>
        </authorList>
    </citation>
    <scope>FUNCTION</scope>
    <scope>IRON-SULFUR BINDING</scope>
    <scope>MUTAGENESIS OF CYS-333; CYS-339; CYS-347; CYS-404 AND 424-LEU--ARG-426</scope>
</reference>
<reference evidence="15 16 17 18 19 20" key="8">
    <citation type="journal article" date="2023" name="Nature">
        <title>Principles of mitoribosomal small subunit assembly in eukaryotes.</title>
        <authorList>
            <person name="Harper N.J."/>
            <person name="Burnside C."/>
            <person name="Klinge S."/>
        </authorList>
    </citation>
    <scope>STRUCTURE BY ELECTRON MICROSCOPY (2.36 ANGSTROMS) IN COMPLEX WITH THE MITOCHONDRIAL RIBOSOME AND IRON-SULFUR</scope>
    <scope>FUNCTION</scope>
    <scope>IRON-SULFUR BINDING</scope>
</reference>
<reference key="9">
    <citation type="journal article" date="2010" name="J. Inherit. Metab. Dis. 33 Suppl.">
        <title>Sequence variants in four candidate genes (NIPSNAP1, GBAS, CHCHD1 and METT11D1) in patients with combined oxidative phosphorylation system deficiencies.</title>
        <authorList>
            <person name="Smits P."/>
            <person name="Rodenburg R.J."/>
            <person name="Smeitink J.A."/>
            <person name="van den Heuvel L.P."/>
        </authorList>
    </citation>
    <scope>VARIANT SER-173</scope>
</reference>
<comment type="function">
    <text evidence="5 6 7">Mitochondrial ribosome (mitoribosome) assembly factor (PubMed:36482135, PubMed:38199006). Binds at the interface of the head and body domains of the mitochondrial small ribosomal subunit (mt-SSU), occluding the mRNA channel and preventing compaction of the head domain towards the body (PubMed:36482135). Probable inactive methyltransferase: retains the characteristic folding and ability to bind S-adenosyl-L-methionine, but it probably lost its methyltransferase activity (PubMed:38234605).</text>
</comment>
<comment type="subunit">
    <text evidence="5">Associates with the mitochondrial ribosome (mitoribosome).</text>
</comment>
<comment type="interaction">
    <interactant intactId="EBI-749353">
        <id>Q9H7H0</id>
    </interactant>
    <interactant intactId="EBI-930964">
        <id>P54253</id>
        <label>ATXN1</label>
    </interactant>
    <organismsDiffer>false</organismsDiffer>
    <experiments>5</experiments>
</comment>
<comment type="interaction">
    <interactant intactId="EBI-749353">
        <id>Q9H7H0</id>
    </interactant>
    <interactant intactId="EBI-739580">
        <id>Q13137</id>
        <label>CALCOCO2</label>
    </interactant>
    <organismsDiffer>false</organismsDiffer>
    <experiments>7</experiments>
</comment>
<comment type="interaction">
    <interactant intactId="EBI-749353">
        <id>Q9H7H0</id>
    </interactant>
    <interactant intactId="EBI-741724">
        <id>Q8NA61</id>
        <label>CBY2</label>
    </interactant>
    <organismsDiffer>false</organismsDiffer>
    <experiments>4</experiments>
</comment>
<comment type="interaction">
    <interactant intactId="EBI-749353">
        <id>Q9H7H0</id>
    </interactant>
    <interactant intactId="EBI-739624">
        <id>Q8NHQ1</id>
        <label>CEP70</label>
    </interactant>
    <organismsDiffer>false</organismsDiffer>
    <experiments>7</experiments>
</comment>
<comment type="interaction">
    <interactant intactId="EBI-749353">
        <id>Q9H7H0</id>
    </interactant>
    <interactant intactId="EBI-10171697">
        <id>Q6A162</id>
        <label>KRT40</label>
    </interactant>
    <organismsDiffer>false</organismsDiffer>
    <experiments>4</experiments>
</comment>
<comment type="interaction">
    <interactant intactId="EBI-749353">
        <id>Q9H7H0</id>
    </interactant>
    <interactant intactId="EBI-724076">
        <id>Q99750</id>
        <label>MDFI</label>
    </interactant>
    <organismsDiffer>false</organismsDiffer>
    <experiments>5</experiments>
</comment>
<comment type="interaction">
    <interactant intactId="EBI-749353">
        <id>Q9H7H0</id>
    </interactant>
    <interactant intactId="EBI-10172526">
        <id>Q9UJV3-2</id>
        <label>MID2</label>
    </interactant>
    <organismsDiffer>false</organismsDiffer>
    <experiments>6</experiments>
</comment>
<comment type="interaction">
    <interactant intactId="EBI-749353">
        <id>Q9H7H0</id>
    </interactant>
    <interactant intactId="EBI-302345">
        <id>Q8ND90</id>
        <label>PNMA1</label>
    </interactant>
    <organismsDiffer>false</organismsDiffer>
    <experiments>7</experiments>
</comment>
<comment type="interaction">
    <interactant intactId="EBI-749353">
        <id>Q9H7H0</id>
    </interactant>
    <interactant intactId="EBI-348469">
        <id>Q15427</id>
        <label>SF3B4</label>
    </interactant>
    <organismsDiffer>false</organismsDiffer>
    <experiments>4</experiments>
</comment>
<comment type="interaction">
    <interactant intactId="EBI-749353">
        <id>Q9H7H0</id>
    </interactant>
    <interactant intactId="EBI-1105213">
        <id>Q9UBB9</id>
        <label>TFIP11</label>
    </interactant>
    <organismsDiffer>false</organismsDiffer>
    <experiments>5</experiments>
</comment>
<comment type="interaction">
    <interactant intactId="EBI-749353">
        <id>Q9H7H0</id>
    </interactant>
    <interactant intactId="EBI-359224">
        <id>Q13077</id>
        <label>TRAF1</label>
    </interactant>
    <organismsDiffer>false</organismsDiffer>
    <experiments>7</experiments>
</comment>
<comment type="interaction">
    <interactant intactId="EBI-749353">
        <id>Q9H7H0</id>
    </interactant>
    <interactant intactId="EBI-742327">
        <id>Q15654</id>
        <label>TRIP6</label>
    </interactant>
    <organismsDiffer>false</organismsDiffer>
    <experiments>5</experiments>
</comment>
<comment type="interaction">
    <interactant intactId="EBI-11098807">
        <id>Q9H7H0-2</id>
    </interactant>
    <interactant intactId="EBI-930964">
        <id>P54253</id>
        <label>ATXN1</label>
    </interactant>
    <organismsDiffer>false</organismsDiffer>
    <experiments>6</experiments>
</comment>
<comment type="interaction">
    <interactant intactId="EBI-11098807">
        <id>Q9H7H0-2</id>
    </interactant>
    <interactant intactId="EBI-739580">
        <id>Q13137</id>
        <label>CALCOCO2</label>
    </interactant>
    <organismsDiffer>false</organismsDiffer>
    <experiments>3</experiments>
</comment>
<comment type="interaction">
    <interactant intactId="EBI-11098807">
        <id>Q9H7H0-2</id>
    </interactant>
    <interactant intactId="EBI-3866279">
        <id>Q9BWT7</id>
        <label>CARD10</label>
    </interactant>
    <organismsDiffer>false</organismsDiffer>
    <experiments>3</experiments>
</comment>
<comment type="interaction">
    <interactant intactId="EBI-11098807">
        <id>Q9H7H0-2</id>
    </interactant>
    <interactant intactId="EBI-11524851">
        <id>Q8NA61-2</id>
        <label>CBY2</label>
    </interactant>
    <organismsDiffer>false</organismsDiffer>
    <experiments>3</experiments>
</comment>
<comment type="interaction">
    <interactant intactId="EBI-11098807">
        <id>Q9H7H0-2</id>
    </interactant>
    <interactant intactId="EBI-739624">
        <id>Q8NHQ1</id>
        <label>CEP70</label>
    </interactant>
    <organismsDiffer>false</organismsDiffer>
    <experiments>3</experiments>
</comment>
<comment type="interaction">
    <interactant intactId="EBI-11098807">
        <id>Q9H7H0-2</id>
    </interactant>
    <interactant intactId="EBI-1047093">
        <id>O76011</id>
        <label>KRT34</label>
    </interactant>
    <organismsDiffer>false</organismsDiffer>
    <experiments>3</experiments>
</comment>
<comment type="interaction">
    <interactant intactId="EBI-11098807">
        <id>Q9H7H0-2</id>
    </interactant>
    <interactant intactId="EBI-10171697">
        <id>Q6A162</id>
        <label>KRT40</label>
    </interactant>
    <organismsDiffer>false</organismsDiffer>
    <experiments>3</experiments>
</comment>
<comment type="interaction">
    <interactant intactId="EBI-11098807">
        <id>Q9H7H0-2</id>
    </interactant>
    <interactant intactId="EBI-724076">
        <id>Q99750</id>
        <label>MDFI</label>
    </interactant>
    <organismsDiffer>false</organismsDiffer>
    <experiments>6</experiments>
</comment>
<comment type="interaction">
    <interactant intactId="EBI-11098807">
        <id>Q9H7H0-2</id>
    </interactant>
    <interactant intactId="EBI-16439278">
        <id>Q6FHY5</id>
        <label>MEOX2</label>
    </interactant>
    <organismsDiffer>false</organismsDiffer>
    <experiments>3</experiments>
</comment>
<comment type="interaction">
    <interactant intactId="EBI-11098807">
        <id>Q9H7H0-2</id>
    </interactant>
    <interactant intactId="EBI-10172526">
        <id>Q9UJV3-2</id>
        <label>MID2</label>
    </interactant>
    <organismsDiffer>false</organismsDiffer>
    <experiments>3</experiments>
</comment>
<comment type="interaction">
    <interactant intactId="EBI-11098807">
        <id>Q9H7H0-2</id>
    </interactant>
    <interactant intactId="EBI-11522433">
        <id>Q5JR59-3</id>
        <label>MTUS2</label>
    </interactant>
    <organismsDiffer>false</organismsDiffer>
    <experiments>3</experiments>
</comment>
<comment type="interaction">
    <interactant intactId="EBI-11098807">
        <id>Q9H7H0-2</id>
    </interactant>
    <interactant intactId="EBI-2949792">
        <id>Q9BRJ7</id>
        <label>NUDT16L1</label>
    </interactant>
    <organismsDiffer>false</organismsDiffer>
    <experiments>3</experiments>
</comment>
<comment type="interaction">
    <interactant intactId="EBI-11098807">
        <id>Q9H7H0-2</id>
    </interactant>
    <interactant intactId="EBI-302345">
        <id>Q8ND90</id>
        <label>PNMA1</label>
    </interactant>
    <organismsDiffer>false</organismsDiffer>
    <experiments>6</experiments>
</comment>
<comment type="interaction">
    <interactant intactId="EBI-11098807">
        <id>Q9H7H0-2</id>
    </interactant>
    <interactant intactId="EBI-355164">
        <id>P55072</id>
        <label>VCP</label>
    </interactant>
    <organismsDiffer>false</organismsDiffer>
    <experiments>3</experiments>
</comment>
<comment type="subcellular location">
    <subcellularLocation>
        <location evidence="1">Mitochondrion matrix</location>
    </subcellularLocation>
</comment>
<comment type="alternative products">
    <event type="alternative splicing"/>
    <isoform>
        <id>Q9H7H0-1</id>
        <name>1</name>
        <sequence type="displayed"/>
    </isoform>
    <isoform>
        <id>Q9H7H0-2</id>
        <name>2</name>
        <sequence type="described" ref="VSP_029720"/>
    </isoform>
    <isoform>
        <id>Q9H7H0-3</id>
        <name>3</name>
        <sequence type="described" ref="VSP_029721"/>
    </isoform>
</comment>
<comment type="domain">
    <text evidence="6">[4Fe-4S] cluster-binding is essential for its ability to promote assembly of the mitochondrial ribosome (mitoribosome).</text>
</comment>
<comment type="similarity">
    <text evidence="13">Belongs to the methyltransferase superfamily. Rsm22 family.</text>
</comment>
<feature type="transit peptide" description="Mitochondrion" evidence="2">
    <location>
        <begin position="1"/>
        <end position="19"/>
    </location>
</feature>
<feature type="chain" id="PRO_0000312163" description="Ribosome assembly protein METTL17, mitochondrial">
    <location>
        <begin position="20"/>
        <end position="456"/>
    </location>
</feature>
<feature type="binding site" evidence="5 15">
    <location>
        <position position="333"/>
    </location>
    <ligand>
        <name>[4Fe-4S] cluster</name>
        <dbReference type="ChEBI" id="CHEBI:49883"/>
    </ligand>
</feature>
<feature type="binding site" evidence="5 15">
    <location>
        <position position="339"/>
    </location>
    <ligand>
        <name>[4Fe-4S] cluster</name>
        <dbReference type="ChEBI" id="CHEBI:49883"/>
    </ligand>
</feature>
<feature type="binding site" evidence="5 15">
    <location>
        <position position="347"/>
    </location>
    <ligand>
        <name>[4Fe-4S] cluster</name>
        <dbReference type="ChEBI" id="CHEBI:49883"/>
    </ligand>
</feature>
<feature type="binding site" evidence="5 15">
    <location>
        <position position="404"/>
    </location>
    <ligand>
        <name>[4Fe-4S] cluster</name>
        <dbReference type="ChEBI" id="CHEBI:49883"/>
    </ligand>
</feature>
<feature type="splice variant" id="VSP_029720" description="In isoform 2." evidence="9">
    <location>
        <begin position="422"/>
        <end position="430"/>
    </location>
</feature>
<feature type="splice variant" id="VSP_029721" description="In isoform 3." evidence="12">
    <original>DLYRCARVSSWGDLLPVLTPSAFPPSTAQDPSES</original>
    <variation>YGGCDQNQWDVAGSCSPRQHLFPQGFVSLCPCQLLGRSFTCAYSVCVSSIYGSGSL</variation>
    <location>
        <begin position="423"/>
        <end position="456"/>
    </location>
</feature>
<feature type="sequence variant" id="VAR_072388" description="In dbSNP:rs72661115." evidence="4">
    <original>A</original>
    <variation>S</variation>
    <location>
        <position position="173"/>
    </location>
</feature>
<feature type="sequence variant" id="VAR_037422" description="In dbSNP:rs2297717.">
    <original>G</original>
    <variation>A</variation>
    <location>
        <position position="289"/>
    </location>
</feature>
<feature type="sequence variant" id="VAR_037423" description="In dbSNP:rs2771350." evidence="3">
    <original>A</original>
    <variation>P</variation>
    <location>
        <position position="346"/>
    </location>
</feature>
<feature type="mutagenesis site" description="Abolished iron-sulfur-binding, leading to impaired ability to promote mitochondrial ribosome assembly; when associated with S-339, S-347 and S-404." evidence="6">
    <original>C</original>
    <variation>S</variation>
    <location>
        <position position="333"/>
    </location>
</feature>
<feature type="mutagenesis site" description="Abolished iron-sulfur-binding, leading to impaired ability to promote mitochondrial ribosome assembly; when associated with S-333, S-347 and S-404." evidence="6">
    <original>C</original>
    <variation>S</variation>
    <location>
        <position position="339"/>
    </location>
</feature>
<feature type="mutagenesis site" description="Abolished iron-sulfur-binding, leading to impaired ability to promote mitochondrial ribosome assembly; when associated with S-333, S-339 and S-404." evidence="6">
    <original>C</original>
    <variation>S</variation>
    <location>
        <position position="347"/>
    </location>
</feature>
<feature type="mutagenesis site" description="Abolished iron-sulfur-binding, leading to impaired ability to promote mitochondrial ribosome assembly; when associated with S-333, S-339 and S-347." evidence="6">
    <original>C</original>
    <variation>S</variation>
    <location>
        <position position="404"/>
    </location>
</feature>
<feature type="mutagenesis site" description="Impaired ability to promote mitochondrial ribosome assembly." evidence="6">
    <original>LYR</original>
    <variation>AAA</variation>
    <location>
        <begin position="424"/>
        <end position="426"/>
    </location>
</feature>
<feature type="sequence conflict" description="In Ref. 1; AAK08200." evidence="13" ref="1">
    <original>P</original>
    <variation>S</variation>
    <location>
        <position position="53"/>
    </location>
</feature>
<feature type="sequence conflict" description="In Ref. 1; AAK08200." evidence="13" ref="1">
    <original>E</original>
    <variation>G</variation>
    <location>
        <position position="318"/>
    </location>
</feature>
<feature type="turn" evidence="23">
    <location>
        <begin position="32"/>
        <end position="34"/>
    </location>
</feature>
<feature type="strand" evidence="23">
    <location>
        <begin position="40"/>
        <end position="42"/>
    </location>
</feature>
<feature type="helix" evidence="23">
    <location>
        <begin position="43"/>
        <end position="46"/>
    </location>
</feature>
<feature type="helix" evidence="21">
    <location>
        <begin position="49"/>
        <end position="51"/>
    </location>
</feature>
<feature type="helix" evidence="23">
    <location>
        <begin position="65"/>
        <end position="74"/>
    </location>
</feature>
<feature type="turn" evidence="23">
    <location>
        <begin position="75"/>
        <end position="77"/>
    </location>
</feature>
<feature type="helix" evidence="23">
    <location>
        <begin position="81"/>
        <end position="96"/>
    </location>
</feature>
<feature type="helix" evidence="23">
    <location>
        <begin position="103"/>
        <end position="116"/>
    </location>
</feature>
<feature type="turn" evidence="24">
    <location>
        <begin position="121"/>
        <end position="123"/>
    </location>
</feature>
<feature type="helix" evidence="23">
    <location>
        <begin position="133"/>
        <end position="139"/>
    </location>
</feature>
<feature type="strand" evidence="24">
    <location>
        <begin position="140"/>
        <end position="142"/>
    </location>
</feature>
<feature type="helix" evidence="23">
    <location>
        <begin position="152"/>
        <end position="180"/>
    </location>
</feature>
<feature type="strand" evidence="23">
    <location>
        <begin position="188"/>
        <end position="193"/>
    </location>
</feature>
<feature type="strand" evidence="23">
    <location>
        <begin position="195"/>
        <end position="197"/>
    </location>
</feature>
<feature type="helix" evidence="23">
    <location>
        <begin position="198"/>
        <end position="207"/>
    </location>
</feature>
<feature type="turn" evidence="23">
    <location>
        <begin position="208"/>
        <end position="210"/>
    </location>
</feature>
<feature type="strand" evidence="23">
    <location>
        <begin position="213"/>
        <end position="217"/>
    </location>
</feature>
<feature type="helix" evidence="23">
    <location>
        <begin position="221"/>
        <end position="231"/>
    </location>
</feature>
<feature type="turn" evidence="23">
    <location>
        <begin position="232"/>
        <end position="234"/>
    </location>
</feature>
<feature type="strand" evidence="23">
    <location>
        <begin position="236"/>
        <end position="238"/>
    </location>
</feature>
<feature type="strand" evidence="22">
    <location>
        <begin position="241"/>
        <end position="243"/>
    </location>
</feature>
<feature type="strand" evidence="23">
    <location>
        <begin position="245"/>
        <end position="250"/>
    </location>
</feature>
<feature type="strand" evidence="22">
    <location>
        <begin position="255"/>
        <end position="257"/>
    </location>
</feature>
<feature type="strand" evidence="23">
    <location>
        <begin position="259"/>
        <end position="266"/>
    </location>
</feature>
<feature type="helix" evidence="23">
    <location>
        <begin position="268"/>
        <end position="270"/>
    </location>
</feature>
<feature type="strand" evidence="23">
    <location>
        <begin position="271"/>
        <end position="273"/>
    </location>
</feature>
<feature type="helix" evidence="23">
    <location>
        <begin position="274"/>
        <end position="286"/>
    </location>
</feature>
<feature type="strand" evidence="23">
    <location>
        <begin position="288"/>
        <end position="299"/>
    </location>
</feature>
<feature type="helix" evidence="23">
    <location>
        <begin position="300"/>
        <end position="314"/>
    </location>
</feature>
<feature type="strand" evidence="23">
    <location>
        <begin position="327"/>
        <end position="332"/>
    </location>
</feature>
<feature type="strand" evidence="23">
    <location>
        <begin position="334"/>
        <end position="337"/>
    </location>
</feature>
<feature type="strand" evidence="23">
    <location>
        <begin position="340"/>
        <end position="345"/>
    </location>
</feature>
<feature type="strand" evidence="23">
    <location>
        <begin position="349"/>
        <end position="354"/>
    </location>
</feature>
<feature type="strand" evidence="23">
    <location>
        <begin position="365"/>
        <end position="377"/>
    </location>
</feature>
<feature type="strand" evidence="23">
    <location>
        <begin position="393"/>
        <end position="395"/>
    </location>
</feature>
<feature type="strand" evidence="23">
    <location>
        <begin position="398"/>
        <end position="404"/>
    </location>
</feature>
<feature type="strand" evidence="23">
    <location>
        <begin position="410"/>
        <end position="416"/>
    </location>
</feature>
<feature type="helix" evidence="23">
    <location>
        <begin position="417"/>
        <end position="420"/>
    </location>
</feature>
<feature type="helix" evidence="23">
    <location>
        <begin position="422"/>
        <end position="430"/>
    </location>
</feature>
<accession>Q9H7H0</accession>
<accession>Q9BSH1</accession>
<accession>Q9BZH2</accession>
<accession>Q9BZH3</accession>
<proteinExistence type="evidence at protein level"/>
<keyword id="KW-0002">3D-structure</keyword>
<keyword id="KW-0004">4Fe-4S</keyword>
<keyword id="KW-0025">Alternative splicing</keyword>
<keyword id="KW-0408">Iron</keyword>
<keyword id="KW-0411">Iron-sulfur</keyword>
<keyword id="KW-0479">Metal-binding</keyword>
<keyword id="KW-0496">Mitochondrion</keyword>
<keyword id="KW-1267">Proteomics identification</keyword>
<keyword id="KW-1185">Reference proteome</keyword>
<keyword id="KW-0949">S-adenosyl-L-methionine</keyword>
<keyword id="KW-0809">Transit peptide</keyword>
<sequence length="456" mass="50734">MAAALKCLLTLGRWCPGLGVAPQARALAALVPGVTQVDNKSGFLQKRPHRQHPGILKLPHVRLPQALANGAQLLLLGSAGPTMENQVQTLTSYLWSRHLPVEPEELQRRARHLEKKFLENPDLSQTEEKLRGAVLHALRKTTYHWQELSYTEGLSLVYMAARLDGGFAAVSRAFHEIRARNPAFQPQTLMDFGSGTGSVTWAAHSIWGQSLREYMCVDRSAAMLVLAEKLLKGGSESGEPYIPGVFFRQFLPVSPKVQFDVVVSAFSLSELPSKADRTEVVQTLWRKTGHFLVLVENGTKAGHSLLMDARDLVLKGKEKSPLDPRPGFVFAPCPHELPCPQLTNLACSFSQAYHPIPFSWNKKPKEEKFSMVILARGSPEEAHRWPRITQPVLKRPRHVHCHLCCPDGHMQHAVLTARRHGRDLYRCARVSSWGDLLPVLTPSAFPPSTAQDPSES</sequence>
<organism>
    <name type="scientific">Homo sapiens</name>
    <name type="common">Human</name>
    <dbReference type="NCBI Taxonomy" id="9606"/>
    <lineage>
        <taxon>Eukaryota</taxon>
        <taxon>Metazoa</taxon>
        <taxon>Chordata</taxon>
        <taxon>Craniata</taxon>
        <taxon>Vertebrata</taxon>
        <taxon>Euteleostomi</taxon>
        <taxon>Mammalia</taxon>
        <taxon>Eutheria</taxon>
        <taxon>Euarchontoglires</taxon>
        <taxon>Primates</taxon>
        <taxon>Haplorrhini</taxon>
        <taxon>Catarrhini</taxon>
        <taxon>Hominidae</taxon>
        <taxon>Homo</taxon>
    </lineage>
</organism>
<evidence type="ECO:0000250" key="1">
    <source>
        <dbReference type="UniProtKB" id="Q3U2U7"/>
    </source>
</evidence>
<evidence type="ECO:0000255" key="2"/>
<evidence type="ECO:0000269" key="3">
    <source>
    </source>
</evidence>
<evidence type="ECO:0000269" key="4">
    <source>
    </source>
</evidence>
<evidence type="ECO:0000269" key="5">
    <source>
    </source>
</evidence>
<evidence type="ECO:0000269" key="6">
    <source>
    </source>
</evidence>
<evidence type="ECO:0000269" key="7">
    <source>
    </source>
</evidence>
<evidence type="ECO:0000303" key="8">
    <source>
    </source>
</evidence>
<evidence type="ECO:0000303" key="9">
    <source>
    </source>
</evidence>
<evidence type="ECO:0000303" key="10">
    <source>
    </source>
</evidence>
<evidence type="ECO:0000303" key="11">
    <source>
    </source>
</evidence>
<evidence type="ECO:0000303" key="12">
    <source ref="1"/>
</evidence>
<evidence type="ECO:0000305" key="13"/>
<evidence type="ECO:0000312" key="14">
    <source>
        <dbReference type="HGNC" id="HGNC:19280"/>
    </source>
</evidence>
<evidence type="ECO:0007744" key="15">
    <source>
        <dbReference type="PDB" id="8CSP"/>
    </source>
</evidence>
<evidence type="ECO:0007744" key="16">
    <source>
        <dbReference type="PDB" id="8CSQ"/>
    </source>
</evidence>
<evidence type="ECO:0007744" key="17">
    <source>
        <dbReference type="PDB" id="8CSR"/>
    </source>
</evidence>
<evidence type="ECO:0007744" key="18">
    <source>
        <dbReference type="PDB" id="8CSS"/>
    </source>
</evidence>
<evidence type="ECO:0007744" key="19">
    <source>
        <dbReference type="PDB" id="8CST"/>
    </source>
</evidence>
<evidence type="ECO:0007744" key="20">
    <source>
        <dbReference type="PDB" id="8CSU"/>
    </source>
</evidence>
<evidence type="ECO:0007829" key="21">
    <source>
        <dbReference type="PDB" id="8CSP"/>
    </source>
</evidence>
<evidence type="ECO:0007829" key="22">
    <source>
        <dbReference type="PDB" id="8CSR"/>
    </source>
</evidence>
<evidence type="ECO:0007829" key="23">
    <source>
        <dbReference type="PDB" id="8CSS"/>
    </source>
</evidence>
<evidence type="ECO:0007829" key="24">
    <source>
        <dbReference type="PDB" id="8CSU"/>
    </source>
</evidence>
<dbReference type="EMBL" id="AF321002">
    <property type="protein sequence ID" value="AAK08200.1"/>
    <property type="molecule type" value="mRNA"/>
</dbReference>
<dbReference type="EMBL" id="AF321003">
    <property type="protein sequence ID" value="AAK08201.1"/>
    <property type="molecule type" value="Genomic_DNA"/>
</dbReference>
<dbReference type="EMBL" id="AK024512">
    <property type="protein sequence ID" value="BAB14919.1"/>
    <property type="molecule type" value="mRNA"/>
</dbReference>
<dbReference type="EMBL" id="CH471078">
    <property type="protein sequence ID" value="EAW66433.1"/>
    <property type="molecule type" value="Genomic_DNA"/>
</dbReference>
<dbReference type="EMBL" id="CH471078">
    <property type="protein sequence ID" value="EAW66434.1"/>
    <property type="molecule type" value="Genomic_DNA"/>
</dbReference>
<dbReference type="EMBL" id="BC005053">
    <property type="protein sequence ID" value="AAH05053.1"/>
    <property type="molecule type" value="mRNA"/>
</dbReference>
<dbReference type="CCDS" id="CCDS41913.1">
    <molecule id="Q9H7H0-3"/>
</dbReference>
<dbReference type="CCDS" id="CCDS9562.1">
    <molecule id="Q9H7H0-1"/>
</dbReference>
<dbReference type="RefSeq" id="NP_001025162.1">
    <molecule id="Q9H7H0-3"/>
    <property type="nucleotide sequence ID" value="NM_001029991.2"/>
</dbReference>
<dbReference type="RefSeq" id="NP_073571.1">
    <molecule id="Q9H7H0-1"/>
    <property type="nucleotide sequence ID" value="NM_022734.3"/>
</dbReference>
<dbReference type="PDB" id="8CSP">
    <property type="method" value="EM"/>
    <property type="resolution" value="2.66 A"/>
    <property type="chains" value="7=1-456"/>
</dbReference>
<dbReference type="PDB" id="8CSQ">
    <property type="method" value="EM"/>
    <property type="resolution" value="2.54 A"/>
    <property type="chains" value="7=1-456"/>
</dbReference>
<dbReference type="PDB" id="8CSR">
    <property type="method" value="EM"/>
    <property type="resolution" value="2.54 A"/>
    <property type="chains" value="7=1-456"/>
</dbReference>
<dbReference type="PDB" id="8CSS">
    <property type="method" value="EM"/>
    <property type="resolution" value="2.36 A"/>
    <property type="chains" value="7=1-456"/>
</dbReference>
<dbReference type="PDB" id="8CST">
    <property type="method" value="EM"/>
    <property type="resolution" value="2.85 A"/>
    <property type="chains" value="7=1-456"/>
</dbReference>
<dbReference type="PDB" id="8CSU">
    <property type="method" value="EM"/>
    <property type="resolution" value="3.03 A"/>
    <property type="chains" value="7=1-456"/>
</dbReference>
<dbReference type="PDBsum" id="8CSP"/>
<dbReference type="PDBsum" id="8CSQ"/>
<dbReference type="PDBsum" id="8CSR"/>
<dbReference type="PDBsum" id="8CSS"/>
<dbReference type="PDBsum" id="8CST"/>
<dbReference type="PDBsum" id="8CSU"/>
<dbReference type="EMDB" id="EMD-26966"/>
<dbReference type="EMDB" id="EMD-26967"/>
<dbReference type="EMDB" id="EMD-26968"/>
<dbReference type="EMDB" id="EMD-26969"/>
<dbReference type="EMDB" id="EMD-26970"/>
<dbReference type="EMDB" id="EMD-26971"/>
<dbReference type="SMR" id="Q9H7H0"/>
<dbReference type="BioGRID" id="122261">
    <property type="interactions" value="437"/>
</dbReference>
<dbReference type="FunCoup" id="Q9H7H0">
    <property type="interactions" value="2475"/>
</dbReference>
<dbReference type="IntAct" id="Q9H7H0">
    <property type="interactions" value="81"/>
</dbReference>
<dbReference type="MINT" id="Q9H7H0"/>
<dbReference type="STRING" id="9606.ENSP00000372445"/>
<dbReference type="iPTMnet" id="Q9H7H0"/>
<dbReference type="PhosphoSitePlus" id="Q9H7H0"/>
<dbReference type="BioMuta" id="METTL17"/>
<dbReference type="DMDM" id="74718673"/>
<dbReference type="jPOST" id="Q9H7H0"/>
<dbReference type="MassIVE" id="Q9H7H0"/>
<dbReference type="PaxDb" id="9606-ENSP00000372445"/>
<dbReference type="PeptideAtlas" id="Q9H7H0"/>
<dbReference type="ProteomicsDB" id="81121">
    <molecule id="Q9H7H0-1"/>
</dbReference>
<dbReference type="ProteomicsDB" id="81122">
    <molecule id="Q9H7H0-2"/>
</dbReference>
<dbReference type="ProteomicsDB" id="81123">
    <molecule id="Q9H7H0-3"/>
</dbReference>
<dbReference type="Pumba" id="Q9H7H0"/>
<dbReference type="Antibodypedia" id="7177">
    <property type="antibodies" value="69 antibodies from 15 providers"/>
</dbReference>
<dbReference type="DNASU" id="64745"/>
<dbReference type="Ensembl" id="ENST00000339374.11">
    <molecule id="Q9H7H0-1"/>
    <property type="protein sequence ID" value="ENSP00000343041.6"/>
    <property type="gene ID" value="ENSG00000165792.18"/>
</dbReference>
<dbReference type="Ensembl" id="ENST00000382985.8">
    <molecule id="Q9H7H0-3"/>
    <property type="protein sequence ID" value="ENSP00000372445.4"/>
    <property type="gene ID" value="ENSG00000165792.18"/>
</dbReference>
<dbReference type="Ensembl" id="ENST00000556670.6">
    <molecule id="Q9H7H0-2"/>
    <property type="protein sequence ID" value="ENSP00000450794.2"/>
    <property type="gene ID" value="ENSG00000165792.18"/>
</dbReference>
<dbReference type="GeneID" id="64745"/>
<dbReference type="KEGG" id="hsa:64745"/>
<dbReference type="MANE-Select" id="ENST00000339374.11">
    <property type="protein sequence ID" value="ENSP00000343041.6"/>
    <property type="RefSeq nucleotide sequence ID" value="NM_022734.3"/>
    <property type="RefSeq protein sequence ID" value="NP_073571.1"/>
</dbReference>
<dbReference type="UCSC" id="uc001vym.5">
    <molecule id="Q9H7H0-1"/>
    <property type="organism name" value="human"/>
</dbReference>
<dbReference type="AGR" id="HGNC:19280"/>
<dbReference type="CTD" id="64745"/>
<dbReference type="GeneCards" id="METTL17"/>
<dbReference type="HGNC" id="HGNC:19280">
    <property type="gene designation" value="METTL17"/>
</dbReference>
<dbReference type="HPA" id="ENSG00000165792">
    <property type="expression patterns" value="Low tissue specificity"/>
</dbReference>
<dbReference type="MIM" id="616091">
    <property type="type" value="gene"/>
</dbReference>
<dbReference type="neXtProt" id="NX_Q9H7H0"/>
<dbReference type="OpenTargets" id="ENSG00000165792"/>
<dbReference type="PharmGKB" id="PA145008140"/>
<dbReference type="VEuPathDB" id="HostDB:ENSG00000165792"/>
<dbReference type="eggNOG" id="KOG2539">
    <property type="taxonomic scope" value="Eukaryota"/>
</dbReference>
<dbReference type="GeneTree" id="ENSGT00390000006103"/>
<dbReference type="HOGENOM" id="CLU_033285_2_0_1"/>
<dbReference type="InParanoid" id="Q9H7H0"/>
<dbReference type="OMA" id="PRKHPGI"/>
<dbReference type="OrthoDB" id="421327at2759"/>
<dbReference type="PAN-GO" id="Q9H7H0">
    <property type="GO annotations" value="0 GO annotations based on evolutionary models"/>
</dbReference>
<dbReference type="PhylomeDB" id="Q9H7H0"/>
<dbReference type="TreeFam" id="TF313708"/>
<dbReference type="PathwayCommons" id="Q9H7H0"/>
<dbReference type="SignaLink" id="Q9H7H0"/>
<dbReference type="BioGRID-ORCS" id="64745">
    <property type="hits" value="366 hits in 1180 CRISPR screens"/>
</dbReference>
<dbReference type="ChiTaRS" id="METTL17">
    <property type="organism name" value="human"/>
</dbReference>
<dbReference type="GenomeRNAi" id="64745"/>
<dbReference type="Pharos" id="Q9H7H0">
    <property type="development level" value="Tbio"/>
</dbReference>
<dbReference type="PRO" id="PR:Q9H7H0"/>
<dbReference type="Proteomes" id="UP000005640">
    <property type="component" value="Chromosome 14"/>
</dbReference>
<dbReference type="RNAct" id="Q9H7H0">
    <property type="molecule type" value="protein"/>
</dbReference>
<dbReference type="Bgee" id="ENSG00000165792">
    <property type="expression patterns" value="Expressed in right adrenal gland cortex and 186 other cell types or tissues"/>
</dbReference>
<dbReference type="ExpressionAtlas" id="Q9H7H0">
    <property type="expression patterns" value="baseline and differential"/>
</dbReference>
<dbReference type="GO" id="GO:0005759">
    <property type="term" value="C:mitochondrial matrix"/>
    <property type="evidence" value="ECO:0000250"/>
    <property type="project" value="UniProtKB"/>
</dbReference>
<dbReference type="GO" id="GO:0005739">
    <property type="term" value="C:mitochondrion"/>
    <property type="evidence" value="ECO:0006056"/>
    <property type="project" value="FlyBase"/>
</dbReference>
<dbReference type="GO" id="GO:0005654">
    <property type="term" value="C:nucleoplasm"/>
    <property type="evidence" value="ECO:0000314"/>
    <property type="project" value="HPA"/>
</dbReference>
<dbReference type="GO" id="GO:0051539">
    <property type="term" value="F:4 iron, 4 sulfur cluster binding"/>
    <property type="evidence" value="ECO:0000314"/>
    <property type="project" value="UniProtKB"/>
</dbReference>
<dbReference type="GO" id="GO:0046872">
    <property type="term" value="F:metal ion binding"/>
    <property type="evidence" value="ECO:0007669"/>
    <property type="project" value="UniProtKB-KW"/>
</dbReference>
<dbReference type="GO" id="GO:0097177">
    <property type="term" value="F:mitochondrial ribosome binding"/>
    <property type="evidence" value="ECO:0007669"/>
    <property type="project" value="Ensembl"/>
</dbReference>
<dbReference type="GO" id="GO:1904047">
    <property type="term" value="F:S-adenosyl-L-methionine binding"/>
    <property type="evidence" value="ECO:0000250"/>
    <property type="project" value="UniProtKB"/>
</dbReference>
<dbReference type="GO" id="GO:0180026">
    <property type="term" value="P:mitochondrial small ribosomal subunit assembly"/>
    <property type="evidence" value="ECO:0000314"/>
    <property type="project" value="UniProtKB"/>
</dbReference>
<dbReference type="GO" id="GO:0042274">
    <property type="term" value="P:ribosomal small subunit biogenesis"/>
    <property type="evidence" value="ECO:0000250"/>
    <property type="project" value="UniProtKB"/>
</dbReference>
<dbReference type="GO" id="GO:0006412">
    <property type="term" value="P:translation"/>
    <property type="evidence" value="ECO:0007669"/>
    <property type="project" value="InterPro"/>
</dbReference>
<dbReference type="FunFam" id="3.40.50.150:FF:000196">
    <property type="entry name" value="methyltransferase-like protein 17, mitochondrial"/>
    <property type="match status" value="1"/>
</dbReference>
<dbReference type="Gene3D" id="3.40.50.150">
    <property type="entry name" value="Vaccinia Virus protein VP39"/>
    <property type="match status" value="1"/>
</dbReference>
<dbReference type="InterPro" id="IPR052571">
    <property type="entry name" value="Mt_RNA_Methyltransferase"/>
</dbReference>
<dbReference type="InterPro" id="IPR015324">
    <property type="entry name" value="Ribosomal_Rsm22-like"/>
</dbReference>
<dbReference type="InterPro" id="IPR029063">
    <property type="entry name" value="SAM-dependent_MTases_sf"/>
</dbReference>
<dbReference type="PANTHER" id="PTHR13184">
    <property type="entry name" value="37S RIBOSOMAL PROTEIN S22"/>
    <property type="match status" value="1"/>
</dbReference>
<dbReference type="PANTHER" id="PTHR13184:SF5">
    <property type="entry name" value="METHYLTRANSFERASE-LIKE PROTEIN 17, MITOCHONDRIAL"/>
    <property type="match status" value="1"/>
</dbReference>
<dbReference type="Pfam" id="PF09243">
    <property type="entry name" value="Rsm22"/>
    <property type="match status" value="1"/>
</dbReference>
<dbReference type="SUPFAM" id="SSF53335">
    <property type="entry name" value="S-adenosyl-L-methionine-dependent methyltransferases"/>
    <property type="match status" value="1"/>
</dbReference>
<gene>
    <name evidence="11 14" type="primary">METTL17</name>
    <name evidence="10" type="synonym">METT11D1</name>
</gene>
<name>MET17_HUMAN</name>
<protein>
    <recommendedName>
        <fullName evidence="13">Ribosome assembly protein METTL17, mitochondrial</fullName>
    </recommendedName>
    <alternativeName>
        <fullName evidence="12">False p73 target gene protein</fullName>
    </alternativeName>
    <alternativeName>
        <fullName evidence="10">Methyltransferase 11 domain-containing protein 1</fullName>
    </alternativeName>
    <alternativeName>
        <fullName evidence="13">Methyltransferase-like protein 17</fullName>
    </alternativeName>
    <alternativeName>
        <fullName evidence="8">Protein RSM22 homolog, mitochondrial</fullName>
    </alternativeName>
</protein>